<protein>
    <recommendedName>
        <fullName evidence="1">2-C-methyl-D-erythritol 4-phosphate cytidylyltransferase</fullName>
        <ecNumber evidence="1">2.7.7.60</ecNumber>
    </recommendedName>
    <alternativeName>
        <fullName evidence="1">4-diphosphocytidyl-2C-methyl-D-erythritol synthase</fullName>
    </alternativeName>
    <alternativeName>
        <fullName evidence="1">MEP cytidylyltransferase</fullName>
        <shortName evidence="1">MCT</shortName>
    </alternativeName>
</protein>
<dbReference type="EC" id="2.7.7.60" evidence="1"/>
<dbReference type="EMBL" id="BA000037">
    <property type="protein sequence ID" value="BAC95579.1"/>
    <property type="molecule type" value="Genomic_DNA"/>
</dbReference>
<dbReference type="RefSeq" id="WP_011151153.1">
    <property type="nucleotide sequence ID" value="NC_005139.1"/>
</dbReference>
<dbReference type="SMR" id="Q7MHQ4"/>
<dbReference type="STRING" id="672.VV93_v1c25250"/>
<dbReference type="KEGG" id="vvy:VV2816"/>
<dbReference type="PATRIC" id="fig|196600.6.peg.2805"/>
<dbReference type="eggNOG" id="COG1211">
    <property type="taxonomic scope" value="Bacteria"/>
</dbReference>
<dbReference type="HOGENOM" id="CLU_061281_3_1_6"/>
<dbReference type="UniPathway" id="UPA00056">
    <property type="reaction ID" value="UER00093"/>
</dbReference>
<dbReference type="Proteomes" id="UP000002675">
    <property type="component" value="Chromosome I"/>
</dbReference>
<dbReference type="GO" id="GO:0050518">
    <property type="term" value="F:2-C-methyl-D-erythritol 4-phosphate cytidylyltransferase activity"/>
    <property type="evidence" value="ECO:0007669"/>
    <property type="project" value="UniProtKB-UniRule"/>
</dbReference>
<dbReference type="GO" id="GO:0019288">
    <property type="term" value="P:isopentenyl diphosphate biosynthetic process, methylerythritol 4-phosphate pathway"/>
    <property type="evidence" value="ECO:0007669"/>
    <property type="project" value="UniProtKB-UniRule"/>
</dbReference>
<dbReference type="CDD" id="cd02516">
    <property type="entry name" value="CDP-ME_synthetase"/>
    <property type="match status" value="1"/>
</dbReference>
<dbReference type="FunFam" id="3.90.550.10:FF:000003">
    <property type="entry name" value="2-C-methyl-D-erythritol 4-phosphate cytidylyltransferase"/>
    <property type="match status" value="1"/>
</dbReference>
<dbReference type="Gene3D" id="3.90.550.10">
    <property type="entry name" value="Spore Coat Polysaccharide Biosynthesis Protein SpsA, Chain A"/>
    <property type="match status" value="1"/>
</dbReference>
<dbReference type="HAMAP" id="MF_00108">
    <property type="entry name" value="IspD"/>
    <property type="match status" value="1"/>
</dbReference>
<dbReference type="InterPro" id="IPR001228">
    <property type="entry name" value="IspD"/>
</dbReference>
<dbReference type="InterPro" id="IPR034683">
    <property type="entry name" value="IspD/TarI"/>
</dbReference>
<dbReference type="InterPro" id="IPR050088">
    <property type="entry name" value="IspD/TarI_cytidylyltransf_bact"/>
</dbReference>
<dbReference type="InterPro" id="IPR018294">
    <property type="entry name" value="ISPD_synthase_CS"/>
</dbReference>
<dbReference type="InterPro" id="IPR029044">
    <property type="entry name" value="Nucleotide-diphossugar_trans"/>
</dbReference>
<dbReference type="NCBIfam" id="TIGR00453">
    <property type="entry name" value="ispD"/>
    <property type="match status" value="1"/>
</dbReference>
<dbReference type="PANTHER" id="PTHR32125">
    <property type="entry name" value="2-C-METHYL-D-ERYTHRITOL 4-PHOSPHATE CYTIDYLYLTRANSFERASE, CHLOROPLASTIC"/>
    <property type="match status" value="1"/>
</dbReference>
<dbReference type="PANTHER" id="PTHR32125:SF4">
    <property type="entry name" value="2-C-METHYL-D-ERYTHRITOL 4-PHOSPHATE CYTIDYLYLTRANSFERASE, CHLOROPLASTIC"/>
    <property type="match status" value="1"/>
</dbReference>
<dbReference type="Pfam" id="PF01128">
    <property type="entry name" value="IspD"/>
    <property type="match status" value="1"/>
</dbReference>
<dbReference type="SUPFAM" id="SSF53448">
    <property type="entry name" value="Nucleotide-diphospho-sugar transferases"/>
    <property type="match status" value="1"/>
</dbReference>
<dbReference type="PROSITE" id="PS01295">
    <property type="entry name" value="ISPD"/>
    <property type="match status" value="1"/>
</dbReference>
<evidence type="ECO:0000255" key="1">
    <source>
        <dbReference type="HAMAP-Rule" id="MF_00108"/>
    </source>
</evidence>
<sequence>MARSMTSLVAVVPAAGVGSRMKADRPKQYLQIHGKTILEHTIERLLSHPAITQVVVAVSEDDPYYSDLAIAQHPDIIRVAGGKERADSVLSALCFLSQQPQKTDWVLVHDAARPCVAHQDIDALIERCSSHETGGILATPVRDTMKRANAQQMIDHTVDRNALWHALTPQMFKAEVLTDALSDALAQGVAITDEASALEWRGALPALVQGCSSNIKVTQPEDLALAEFYLSREKDRK</sequence>
<keyword id="KW-0414">Isoprene biosynthesis</keyword>
<keyword id="KW-0548">Nucleotidyltransferase</keyword>
<keyword id="KW-0808">Transferase</keyword>
<reference key="1">
    <citation type="journal article" date="2003" name="Genome Res.">
        <title>Comparative genome analysis of Vibrio vulnificus, a marine pathogen.</title>
        <authorList>
            <person name="Chen C.-Y."/>
            <person name="Wu K.-M."/>
            <person name="Chang Y.-C."/>
            <person name="Chang C.-H."/>
            <person name="Tsai H.-C."/>
            <person name="Liao T.-L."/>
            <person name="Liu Y.-M."/>
            <person name="Chen H.-J."/>
            <person name="Shen A.B.-T."/>
            <person name="Li J.-C."/>
            <person name="Su T.-L."/>
            <person name="Shao C.-P."/>
            <person name="Lee C.-T."/>
            <person name="Hor L.-I."/>
            <person name="Tsai S.-F."/>
        </authorList>
    </citation>
    <scope>NUCLEOTIDE SEQUENCE [LARGE SCALE GENOMIC DNA]</scope>
    <source>
        <strain>YJ016</strain>
    </source>
</reference>
<organism>
    <name type="scientific">Vibrio vulnificus (strain YJ016)</name>
    <dbReference type="NCBI Taxonomy" id="196600"/>
    <lineage>
        <taxon>Bacteria</taxon>
        <taxon>Pseudomonadati</taxon>
        <taxon>Pseudomonadota</taxon>
        <taxon>Gammaproteobacteria</taxon>
        <taxon>Vibrionales</taxon>
        <taxon>Vibrionaceae</taxon>
        <taxon>Vibrio</taxon>
    </lineage>
</organism>
<proteinExistence type="inferred from homology"/>
<comment type="function">
    <text evidence="1">Catalyzes the formation of 4-diphosphocytidyl-2-C-methyl-D-erythritol from CTP and 2-C-methyl-D-erythritol 4-phosphate (MEP).</text>
</comment>
<comment type="catalytic activity">
    <reaction evidence="1">
        <text>2-C-methyl-D-erythritol 4-phosphate + CTP + H(+) = 4-CDP-2-C-methyl-D-erythritol + diphosphate</text>
        <dbReference type="Rhea" id="RHEA:13429"/>
        <dbReference type="ChEBI" id="CHEBI:15378"/>
        <dbReference type="ChEBI" id="CHEBI:33019"/>
        <dbReference type="ChEBI" id="CHEBI:37563"/>
        <dbReference type="ChEBI" id="CHEBI:57823"/>
        <dbReference type="ChEBI" id="CHEBI:58262"/>
        <dbReference type="EC" id="2.7.7.60"/>
    </reaction>
</comment>
<comment type="pathway">
    <text evidence="1">Isoprenoid biosynthesis; isopentenyl diphosphate biosynthesis via DXP pathway; isopentenyl diphosphate from 1-deoxy-D-xylulose 5-phosphate: step 2/6.</text>
</comment>
<comment type="similarity">
    <text evidence="1">Belongs to the IspD/TarI cytidylyltransferase family. IspD subfamily.</text>
</comment>
<gene>
    <name evidence="1" type="primary">ispD</name>
    <name type="ordered locus">VV2816</name>
</gene>
<name>ISPD_VIBVY</name>
<feature type="chain" id="PRO_0000075647" description="2-C-methyl-D-erythritol 4-phosphate cytidylyltransferase">
    <location>
        <begin position="1"/>
        <end position="237"/>
    </location>
</feature>
<feature type="site" description="Transition state stabilizer" evidence="1">
    <location>
        <position position="20"/>
    </location>
</feature>
<feature type="site" description="Transition state stabilizer" evidence="1">
    <location>
        <position position="27"/>
    </location>
</feature>
<feature type="site" description="Positions MEP for the nucleophilic attack" evidence="1">
    <location>
        <position position="160"/>
    </location>
</feature>
<feature type="site" description="Positions MEP for the nucleophilic attack" evidence="1">
    <location>
        <position position="216"/>
    </location>
</feature>
<accession>Q7MHQ4</accession>